<organism>
    <name type="scientific">Saccharomyces cerevisiae (strain ATCC 204508 / S288c)</name>
    <name type="common">Baker's yeast</name>
    <dbReference type="NCBI Taxonomy" id="559292"/>
    <lineage>
        <taxon>Eukaryota</taxon>
        <taxon>Fungi</taxon>
        <taxon>Dikarya</taxon>
        <taxon>Ascomycota</taxon>
        <taxon>Saccharomycotina</taxon>
        <taxon>Saccharomycetes</taxon>
        <taxon>Saccharomycetales</taxon>
        <taxon>Saccharomycetaceae</taxon>
        <taxon>Saccharomyces</taxon>
    </lineage>
</organism>
<feature type="chain" id="PRO_0000199566" description="Transposon Ty1-ML1 Gag-Pol polyprotein">
    <location>
        <begin position="1"/>
        <end position="1755"/>
    </location>
</feature>
<feature type="chain" id="PRO_0000279117" description="Capsid protein" evidence="1">
    <location>
        <begin position="1"/>
        <end position="401"/>
    </location>
</feature>
<feature type="chain" id="PRO_0000279118" description="Ty1 protease" evidence="1">
    <location>
        <begin position="402"/>
        <end position="582"/>
    </location>
</feature>
<feature type="chain" id="PRO_0000279119" description="Integrase" evidence="1">
    <location>
        <begin position="583"/>
        <end position="1217"/>
    </location>
</feature>
<feature type="chain" id="PRO_0000279120" description="Reverse transcriptase/ribonuclease H" evidence="1">
    <location>
        <begin position="1218"/>
        <end position="1755"/>
    </location>
</feature>
<feature type="domain" description="Integrase catalytic" evidence="2">
    <location>
        <begin position="660"/>
        <end position="835"/>
    </location>
</feature>
<feature type="domain" description="Reverse transcriptase Ty1/copia-type">
    <location>
        <begin position="1338"/>
        <end position="1476"/>
    </location>
</feature>
<feature type="domain" description="RNase H Ty1/copia-type">
    <location>
        <begin position="1610"/>
        <end position="1752"/>
    </location>
</feature>
<feature type="region of interest" description="Disordered" evidence="4">
    <location>
        <begin position="1"/>
        <end position="88"/>
    </location>
</feature>
<feature type="region of interest" description="Disordered" evidence="4">
    <location>
        <begin position="126"/>
        <end position="173"/>
    </location>
</feature>
<feature type="region of interest" description="RNA-binding" evidence="1">
    <location>
        <begin position="299"/>
        <end position="401"/>
    </location>
</feature>
<feature type="region of interest" description="Disordered" evidence="4">
    <location>
        <begin position="352"/>
        <end position="421"/>
    </location>
</feature>
<feature type="region of interest" description="Integrase-type zinc finger-like">
    <location>
        <begin position="583"/>
        <end position="640"/>
    </location>
</feature>
<feature type="region of interest" description="Disordered" evidence="4">
    <location>
        <begin position="956"/>
        <end position="1087"/>
    </location>
</feature>
<feature type="region of interest" description="Disordered" evidence="4">
    <location>
        <begin position="1092"/>
        <end position="1111"/>
    </location>
</feature>
<feature type="region of interest" description="Disordered" evidence="4">
    <location>
        <begin position="1130"/>
        <end position="1171"/>
    </location>
</feature>
<feature type="short sequence motif" description="Bipartite nuclear localization signal" evidence="1">
    <location>
        <begin position="1178"/>
        <end position="1212"/>
    </location>
</feature>
<feature type="compositionally biased region" description="Polar residues" evidence="4">
    <location>
        <begin position="1"/>
        <end position="23"/>
    </location>
</feature>
<feature type="compositionally biased region" description="Polar residues" evidence="4">
    <location>
        <begin position="48"/>
        <end position="60"/>
    </location>
</feature>
<feature type="compositionally biased region" description="Polar residues" evidence="4">
    <location>
        <begin position="127"/>
        <end position="152"/>
    </location>
</feature>
<feature type="compositionally biased region" description="Low complexity" evidence="4">
    <location>
        <begin position="153"/>
        <end position="165"/>
    </location>
</feature>
<feature type="compositionally biased region" description="Low complexity" evidence="4">
    <location>
        <begin position="402"/>
        <end position="418"/>
    </location>
</feature>
<feature type="compositionally biased region" description="Low complexity" evidence="4">
    <location>
        <begin position="960"/>
        <end position="969"/>
    </location>
</feature>
<feature type="compositionally biased region" description="Polar residues" evidence="4">
    <location>
        <begin position="1005"/>
        <end position="1015"/>
    </location>
</feature>
<feature type="compositionally biased region" description="Basic and acidic residues" evidence="4">
    <location>
        <begin position="1038"/>
        <end position="1053"/>
    </location>
</feature>
<feature type="compositionally biased region" description="Polar residues" evidence="4">
    <location>
        <begin position="1054"/>
        <end position="1082"/>
    </location>
</feature>
<feature type="compositionally biased region" description="Polar residues" evidence="4">
    <location>
        <begin position="1101"/>
        <end position="1111"/>
    </location>
</feature>
<feature type="active site" description="For protease activity; shared with dimeric partner" evidence="3">
    <location>
        <position position="461"/>
    </location>
</feature>
<feature type="binding site" evidence="2">
    <location>
        <position position="671"/>
    </location>
    <ligand>
        <name>Mg(2+)</name>
        <dbReference type="ChEBI" id="CHEBI:18420"/>
        <label>1</label>
        <note>catalytic; for integrase activity</note>
    </ligand>
</feature>
<feature type="binding site" evidence="2">
    <location>
        <position position="736"/>
    </location>
    <ligand>
        <name>Mg(2+)</name>
        <dbReference type="ChEBI" id="CHEBI:18420"/>
        <label>1</label>
        <note>catalytic; for integrase activity</note>
    </ligand>
</feature>
<feature type="binding site" evidence="2">
    <location>
        <position position="1346"/>
    </location>
    <ligand>
        <name>Mg(2+)</name>
        <dbReference type="ChEBI" id="CHEBI:18420"/>
        <label>2</label>
        <note>catalytic; for reverse transcriptase activity</note>
    </ligand>
</feature>
<feature type="binding site" evidence="2">
    <location>
        <position position="1427"/>
    </location>
    <ligand>
        <name>Mg(2+)</name>
        <dbReference type="ChEBI" id="CHEBI:18420"/>
        <label>2</label>
        <note>catalytic; for reverse transcriptase activity</note>
    </ligand>
</feature>
<feature type="binding site" evidence="2">
    <location>
        <position position="1428"/>
    </location>
    <ligand>
        <name>Mg(2+)</name>
        <dbReference type="ChEBI" id="CHEBI:18420"/>
        <label>2</label>
        <note>catalytic; for reverse transcriptase activity</note>
    </ligand>
</feature>
<feature type="binding site" evidence="2">
    <location>
        <position position="1610"/>
    </location>
    <ligand>
        <name>Mg(2+)</name>
        <dbReference type="ChEBI" id="CHEBI:18420"/>
        <label>3</label>
        <note>catalytic; for RNase H activity</note>
    </ligand>
</feature>
<feature type="binding site" evidence="2">
    <location>
        <position position="1652"/>
    </location>
    <ligand>
        <name>Mg(2+)</name>
        <dbReference type="ChEBI" id="CHEBI:18420"/>
        <label>3</label>
        <note>catalytic; for RNase H activity</note>
    </ligand>
</feature>
<feature type="binding site" evidence="2">
    <location>
        <position position="1685"/>
    </location>
    <ligand>
        <name>Mg(2+)</name>
        <dbReference type="ChEBI" id="CHEBI:18420"/>
        <label>3</label>
        <note>catalytic; for RNase H activity</note>
    </ligand>
</feature>
<feature type="site" description="Cleavage; by Ty1 protease" evidence="1">
    <location>
        <begin position="401"/>
        <end position="402"/>
    </location>
</feature>
<feature type="site" description="Cleavage; by Ty1 protease" evidence="1">
    <location>
        <begin position="582"/>
        <end position="583"/>
    </location>
</feature>
<feature type="site" description="Cleavage; by Ty1 protease" evidence="1">
    <location>
        <begin position="1217"/>
        <end position="1218"/>
    </location>
</feature>
<dbReference type="EC" id="3.4.23.-"/>
<dbReference type="EC" id="2.7.7.49"/>
<dbReference type="EC" id="2.7.7.7"/>
<dbReference type="EC" id="3.1.26.4"/>
<dbReference type="EMBL" id="Z47816">
    <property type="protein sequence ID" value="CAA87830.1"/>
    <property type="status" value="ALT_SEQ"/>
    <property type="molecule type" value="Genomic_DNA"/>
</dbReference>
<dbReference type="EMBL" id="BK006946">
    <property type="protein sequence ID" value="DAA09854.1"/>
    <property type="molecule type" value="Genomic_DNA"/>
</dbReference>
<dbReference type="PIR" id="B22999">
    <property type="entry name" value="B22999"/>
</dbReference>
<dbReference type="PIR" id="S40969">
    <property type="entry name" value="S40969"/>
</dbReference>
<dbReference type="PIR" id="S50948">
    <property type="entry name" value="S50948"/>
</dbReference>
<dbReference type="RefSeq" id="NP_013668.1">
    <molecule id="Q04711-1"/>
    <property type="nucleotide sequence ID" value="NM_001182402.2"/>
</dbReference>
<dbReference type="SMR" id="Q04711"/>
<dbReference type="BioGRID" id="35125">
    <property type="interactions" value="8"/>
</dbReference>
<dbReference type="FunCoup" id="Q04711">
    <property type="interactions" value="50"/>
</dbReference>
<dbReference type="IntAct" id="Q04711">
    <property type="interactions" value="2"/>
</dbReference>
<dbReference type="MINT" id="Q04711"/>
<dbReference type="GlyGen" id="Q04711">
    <property type="glycosylation" value="3 sites"/>
</dbReference>
<dbReference type="PaxDb" id="4932-YML045W"/>
<dbReference type="PeptideAtlas" id="Q04711"/>
<dbReference type="GeneID" id="854963"/>
<dbReference type="KEGG" id="sce:YML045W"/>
<dbReference type="AGR" id="SGD:S000004508"/>
<dbReference type="SGD" id="S000004508">
    <property type="gene designation" value="YML045W"/>
</dbReference>
<dbReference type="VEuPathDB" id="FungiDB:YML045W"/>
<dbReference type="eggNOG" id="KOG0017">
    <property type="taxonomic scope" value="Eukaryota"/>
</dbReference>
<dbReference type="HOGENOM" id="CLU_244151_0_0_1"/>
<dbReference type="InParanoid" id="Q04711"/>
<dbReference type="OrthoDB" id="5423336at2759"/>
<dbReference type="ChiTaRS" id="YML045W">
    <property type="organism name" value="yeast"/>
</dbReference>
<dbReference type="Proteomes" id="UP000002311">
    <property type="component" value="Chromosome XIII"/>
</dbReference>
<dbReference type="RNAct" id="Q04711">
    <property type="molecule type" value="protein"/>
</dbReference>
<dbReference type="GO" id="GO:0005737">
    <property type="term" value="C:cytoplasm"/>
    <property type="evidence" value="ECO:0007669"/>
    <property type="project" value="UniProtKB-SubCell"/>
</dbReference>
<dbReference type="GO" id="GO:0005634">
    <property type="term" value="C:nucleus"/>
    <property type="evidence" value="ECO:0000314"/>
    <property type="project" value="SGD"/>
</dbReference>
<dbReference type="GO" id="GO:0004190">
    <property type="term" value="F:aspartic-type endopeptidase activity"/>
    <property type="evidence" value="ECO:0007669"/>
    <property type="project" value="UniProtKB-KW"/>
</dbReference>
<dbReference type="GO" id="GO:0005524">
    <property type="term" value="F:ATP binding"/>
    <property type="evidence" value="ECO:0007669"/>
    <property type="project" value="UniProtKB-KW"/>
</dbReference>
<dbReference type="GO" id="GO:0003677">
    <property type="term" value="F:DNA binding"/>
    <property type="evidence" value="ECO:0007669"/>
    <property type="project" value="UniProtKB-KW"/>
</dbReference>
<dbReference type="GO" id="GO:0003887">
    <property type="term" value="F:DNA-directed DNA polymerase activity"/>
    <property type="evidence" value="ECO:0007669"/>
    <property type="project" value="UniProtKB-KW"/>
</dbReference>
<dbReference type="GO" id="GO:0003723">
    <property type="term" value="F:RNA binding"/>
    <property type="evidence" value="ECO:0007669"/>
    <property type="project" value="UniProtKB-KW"/>
</dbReference>
<dbReference type="GO" id="GO:0003964">
    <property type="term" value="F:RNA-directed DNA polymerase activity"/>
    <property type="evidence" value="ECO:0007669"/>
    <property type="project" value="UniProtKB-KW"/>
</dbReference>
<dbReference type="GO" id="GO:0004523">
    <property type="term" value="F:RNA-DNA hybrid ribonuclease activity"/>
    <property type="evidence" value="ECO:0007669"/>
    <property type="project" value="UniProtKB-EC"/>
</dbReference>
<dbReference type="GO" id="GO:0008270">
    <property type="term" value="F:zinc ion binding"/>
    <property type="evidence" value="ECO:0007669"/>
    <property type="project" value="UniProtKB-KW"/>
</dbReference>
<dbReference type="GO" id="GO:0015074">
    <property type="term" value="P:DNA integration"/>
    <property type="evidence" value="ECO:0007669"/>
    <property type="project" value="UniProtKB-KW"/>
</dbReference>
<dbReference type="GO" id="GO:0006310">
    <property type="term" value="P:DNA recombination"/>
    <property type="evidence" value="ECO:0007669"/>
    <property type="project" value="UniProtKB-KW"/>
</dbReference>
<dbReference type="GO" id="GO:0006508">
    <property type="term" value="P:proteolysis"/>
    <property type="evidence" value="ECO:0007669"/>
    <property type="project" value="UniProtKB-KW"/>
</dbReference>
<dbReference type="GO" id="GO:0032196">
    <property type="term" value="P:transposition"/>
    <property type="evidence" value="ECO:0007669"/>
    <property type="project" value="UniProtKB-KW"/>
</dbReference>
<dbReference type="GO" id="GO:0075523">
    <property type="term" value="P:viral translational frameshifting"/>
    <property type="evidence" value="ECO:0007669"/>
    <property type="project" value="UniProtKB-KW"/>
</dbReference>
<dbReference type="CDD" id="cd09272">
    <property type="entry name" value="RNase_HI_RT_Ty1"/>
    <property type="match status" value="1"/>
</dbReference>
<dbReference type="FunFam" id="3.30.420.10:FF:000050">
    <property type="entry name" value="Transposon Ty2-DR3 Gag-Pol polyprotein"/>
    <property type="match status" value="1"/>
</dbReference>
<dbReference type="Gene3D" id="3.30.420.10">
    <property type="entry name" value="Ribonuclease H-like superfamily/Ribonuclease H"/>
    <property type="match status" value="1"/>
</dbReference>
<dbReference type="InterPro" id="IPR001969">
    <property type="entry name" value="Aspartic_peptidase_AS"/>
</dbReference>
<dbReference type="InterPro" id="IPR043502">
    <property type="entry name" value="DNA/RNA_pol_sf"/>
</dbReference>
<dbReference type="InterPro" id="IPR001584">
    <property type="entry name" value="Integrase_cat-core"/>
</dbReference>
<dbReference type="InterPro" id="IPR039537">
    <property type="entry name" value="Retrotran_Ty1/copia-like"/>
</dbReference>
<dbReference type="InterPro" id="IPR012337">
    <property type="entry name" value="RNaseH-like_sf"/>
</dbReference>
<dbReference type="InterPro" id="IPR036397">
    <property type="entry name" value="RNaseH_sf"/>
</dbReference>
<dbReference type="InterPro" id="IPR013103">
    <property type="entry name" value="RVT_2"/>
</dbReference>
<dbReference type="InterPro" id="IPR015820">
    <property type="entry name" value="TYA"/>
</dbReference>
<dbReference type="PANTHER" id="PTHR42648">
    <property type="entry name" value="TRANSPOSASE, PUTATIVE-RELATED"/>
    <property type="match status" value="1"/>
</dbReference>
<dbReference type="PANTHER" id="PTHR42648:SF11">
    <property type="entry name" value="TRANSPOSON TY4-P GAG-POL POLYPROTEIN"/>
    <property type="match status" value="1"/>
</dbReference>
<dbReference type="Pfam" id="PF00665">
    <property type="entry name" value="rve"/>
    <property type="match status" value="1"/>
</dbReference>
<dbReference type="Pfam" id="PF07727">
    <property type="entry name" value="RVT_2"/>
    <property type="match status" value="1"/>
</dbReference>
<dbReference type="Pfam" id="PF01021">
    <property type="entry name" value="TYA"/>
    <property type="match status" value="1"/>
</dbReference>
<dbReference type="SUPFAM" id="SSF56672">
    <property type="entry name" value="DNA/RNA polymerases"/>
    <property type="match status" value="1"/>
</dbReference>
<dbReference type="SUPFAM" id="SSF53098">
    <property type="entry name" value="Ribonuclease H-like"/>
    <property type="match status" value="1"/>
</dbReference>
<dbReference type="PROSITE" id="PS00141">
    <property type="entry name" value="ASP_PROTEASE"/>
    <property type="match status" value="1"/>
</dbReference>
<dbReference type="PROSITE" id="PS50994">
    <property type="entry name" value="INTEGRASE"/>
    <property type="match status" value="1"/>
</dbReference>
<accession>Q04711</accession>
<accession>D6VZD0</accession>
<name>YM11B_YEAST</name>
<sequence>MESQQLSNYPNISHGSACASVTSKEVHTNQDPLDVSASKIQEYDKASTKANSQQTTTPASSAVPENLHHASPQPASVPPPQNGPYPQQCMMTQNQANPSGWSFYGHPSMIPYTPYQMSPMYFPPGPQSQFPQYPSSVGTPLSTPSPESGNTFTDSSSADSDMTSTKKYVRPPPMLTSPNDFPNWVKTYIKFLQNSNLGGIIPTVNGKPVRQITDDELTFLYNTFQIFAPSQFLPTWVKDILSVDYTDIMKILSKSIEKMQSDTQEANDIVTLANLQYNGSTPADAFETKVTNIIDRLNNNGIHINNKVACQLIMRGLSGEYKFLRYTRHRHLNMTVAELFLDIHAIYEEQQGSRNSKPNYRRNPSDEKNDSRSYTNTTKPKVIARNPQKTNNSKSKTARAHNVSTSNNSPSTDNDSISKSTTEPIQLNNKHDLHLGQKLTESTVNHTNHSDDELPGHLLLDSGASRTLIRSAHHIHSASSNPDINVVDAQKRNIPINAIGDLQFHFQDNTKTSIKVLHTPNIAYDLLSLNELAAVDITACFTKNVLERSDGTVLAPIVKYGDFYWVSKKYLLPSNISVPTINNVHTSESTRKYPYPFIHRMLAHANAQTIRYSLKNNTITYFNESDVDWSSAIDYQCPDCLIGKSTKHRHIKGSRLKYQNSYEPFQYLHTDIFGPVHNLPKSAPSYFISFTDETTKFRWVYPLHDRREDSILDVFTTILAFIKNQFQASVLVIQMDRGSEYTNRTLHKFLEKNGITPCYTTTADSRAHGVAERLNRTLLDDCRTQLQCSGLPNHLWFSAIEFSTIVRNSLASPKSKKSARQHAGLAGLDISTLLPFGQPVIVNDHNPNSKIHPRGIPGYALHPSRNSYGYIIYLPSLKKTVDTTNYVILQGKESRLDQFNYDALTFDEDLNRLTASYQSFIASNEIQQSDDLNIESDHDFQSDIELHPEQPRNVLSKAVSPTDSTPPSTHTEDSKRVSKTNIRAPREVDPNISESNILPSKKRSSTPQISNIESTGSGGMHKLNVPLLAPMSQSNTHESSHASKSKDFRHSDSYSENETNHTNVPISSTGGTNNKTVPQISDQETEKRIIHRSPSIDASPPENNSSHNIVPIKTPTTVSEQNTEESIIADLPLPDLPPESPTEFPDPFKELPPINSHQTNSSLGGIGDSNAYTTINSKKRSLEDNETEIKVSRDTWNTKNMRSLEPPRSKKRIHLIAAVKAVKSIKPIRTTLRYDEAITYNKDIKEKEKYIEAYHKEVNQLLKMNTWDTDKYYDRKEIDPKRVINSMFIFNRKRDGTHKARFVARGDIQHPDTYDSGMQSNTVHHYALMTSLSLALDNNYYITQLDISSAYLYADIKEELYIRPPPHLGMNDKLIRLKKSLYGLKQSGANWYETIKSYLIKQCGMEEVRGWSCVFKNSQVTICLFVDDMILFSKDLNANKKIITTLKKQYDTKIINLGESDNEIQYDILGLEIKYQRGKYMKLGMENSLTEKIPKLNVPLNPKGRKLSAPGQPGLYIDQDELEIDEDEYKEKVHEMQKLIGLASYVGYKFRFDLLYYINTLAQHILFPSRQVLDMTYELIQFMWDTRDKQLIWHKNKPTEPDNKLVAISDASYGNQPYYKSQIGNIYLLNGKVIGGKSTKASLTCTSTTEAEIHAISESVPLLNNLSHLVQELNKKPITKGLLTDSKSTISIIISNNEEKFRNRFFGTKAMRLRDEVSGNHLHVCYIETKKNIADVMTKPLPIKTFKLLTNKWIH</sequence>
<reference key="1">
    <citation type="journal article" date="1997" name="Nature">
        <title>The nucleotide sequence of Saccharomyces cerevisiae chromosome XIII.</title>
        <authorList>
            <person name="Bowman S."/>
            <person name="Churcher C.M."/>
            <person name="Badcock K."/>
            <person name="Brown D."/>
            <person name="Chillingworth T."/>
            <person name="Connor R."/>
            <person name="Dedman K."/>
            <person name="Devlin K."/>
            <person name="Gentles S."/>
            <person name="Hamlin N."/>
            <person name="Hunt S."/>
            <person name="Jagels K."/>
            <person name="Lye G."/>
            <person name="Moule S."/>
            <person name="Odell C."/>
            <person name="Pearson D."/>
            <person name="Rajandream M.A."/>
            <person name="Rice P."/>
            <person name="Skelton J."/>
            <person name="Walsh S.V."/>
            <person name="Whitehead S."/>
            <person name="Barrell B.G."/>
        </authorList>
    </citation>
    <scope>NUCLEOTIDE SEQUENCE [LARGE SCALE GENOMIC DNA]</scope>
    <source>
        <strain>ATCC 204508 / S288c</strain>
    </source>
</reference>
<reference key="2">
    <citation type="journal article" date="2014" name="G3 (Bethesda)">
        <title>The reference genome sequence of Saccharomyces cerevisiae: Then and now.</title>
        <authorList>
            <person name="Engel S.R."/>
            <person name="Dietrich F.S."/>
            <person name="Fisk D.G."/>
            <person name="Binkley G."/>
            <person name="Balakrishnan R."/>
            <person name="Costanzo M.C."/>
            <person name="Dwight S.S."/>
            <person name="Hitz B.C."/>
            <person name="Karra K."/>
            <person name="Nash R.S."/>
            <person name="Weng S."/>
            <person name="Wong E.D."/>
            <person name="Lloyd P."/>
            <person name="Skrzypek M.S."/>
            <person name="Miyasato S.R."/>
            <person name="Simison M."/>
            <person name="Cherry J.M."/>
        </authorList>
    </citation>
    <scope>GENOME REANNOTATION</scope>
    <source>
        <strain>ATCC 204508 / S288c</strain>
    </source>
</reference>
<reference key="3">
    <citation type="journal article" date="1998" name="Genome Res.">
        <title>Transposable elements and genome organization: a comprehensive survey of retrotransposons revealed by the complete Saccharomyces cerevisiae genome sequence.</title>
        <authorList>
            <person name="Kim J.M."/>
            <person name="Vanguri S."/>
            <person name="Boeke J.D."/>
            <person name="Gabriel A."/>
            <person name="Voytas D.F."/>
        </authorList>
    </citation>
    <scope>NOMENCLATURE</scope>
</reference>
<reference key="4">
    <citation type="journal article" date="2005" name="Cytogenet. Genome Res.">
        <title>Happy together: the life and times of Ty retrotransposons and their hosts.</title>
        <authorList>
            <person name="Lesage P."/>
            <person name="Todeschini A.L."/>
        </authorList>
    </citation>
    <scope>REVIEW</scope>
</reference>
<reference key="5">
    <citation type="journal article" date="2005" name="Cytogenet. Genome Res.">
        <title>Reverse transcriptase and integrase of the Saccharomyces cerevisiae Ty1 element.</title>
        <authorList>
            <person name="Wilhelm F.-X."/>
            <person name="Wilhelm M."/>
            <person name="Gabriel A."/>
        </authorList>
    </citation>
    <scope>REVIEW</scope>
    <scope>DOMAINS</scope>
</reference>
<protein>
    <recommendedName>
        <fullName>Transposon Ty1-ML1 Gag-Pol polyprotein</fullName>
    </recommendedName>
    <alternativeName>
        <fullName>Gag-Pol-p199</fullName>
    </alternativeName>
    <alternativeName>
        <fullName>TY1A-TY1B</fullName>
    </alternativeName>
    <alternativeName>
        <fullName>Transposon Ty1 TYA-TYB polyprotein</fullName>
    </alternativeName>
    <alternativeName>
        <fullName>p190</fullName>
    </alternativeName>
    <component>
        <recommendedName>
            <fullName>Capsid protein</fullName>
            <shortName>CA</shortName>
        </recommendedName>
        <alternativeName>
            <fullName>Gag-p45</fullName>
        </alternativeName>
        <alternativeName>
            <fullName>p54</fullName>
        </alternativeName>
    </component>
    <component>
        <recommendedName>
            <fullName>Ty1 protease</fullName>
            <shortName>PR</shortName>
            <ecNumber>3.4.23.-</ecNumber>
        </recommendedName>
        <alternativeName>
            <fullName>Pol-p20</fullName>
        </alternativeName>
        <alternativeName>
            <fullName>p23</fullName>
        </alternativeName>
    </component>
    <component>
        <recommendedName>
            <fullName>Integrase</fullName>
            <shortName>IN</shortName>
        </recommendedName>
        <alternativeName>
            <fullName>Pol-p71</fullName>
        </alternativeName>
        <alternativeName>
            <fullName>p84</fullName>
        </alternativeName>
        <alternativeName>
            <fullName>p90</fullName>
        </alternativeName>
    </component>
    <component>
        <recommendedName>
            <fullName>Reverse transcriptase/ribonuclease H</fullName>
            <shortName>RT</shortName>
            <shortName>RT-RH</shortName>
            <ecNumber>2.7.7.49</ecNumber>
            <ecNumber>2.7.7.7</ecNumber>
            <ecNumber>3.1.26.4</ecNumber>
        </recommendedName>
        <alternativeName>
            <fullName>Pol-p63</fullName>
        </alternativeName>
        <alternativeName>
            <fullName>p60</fullName>
        </alternativeName>
    </component>
</protein>
<proteinExistence type="inferred from homology"/>
<gene>
    <name type="primary">TY1B-ML1</name>
    <name type="synonym">YMLWTy1-1 POL</name>
    <name type="ordered locus">YML045W</name>
    <name type="ORF">YM9827.08</name>
</gene>
<evidence type="ECO:0000250" key="1"/>
<evidence type="ECO:0000255" key="2">
    <source>
        <dbReference type="PROSITE-ProRule" id="PRU00457"/>
    </source>
</evidence>
<evidence type="ECO:0000255" key="3">
    <source>
        <dbReference type="PROSITE-ProRule" id="PRU10094"/>
    </source>
</evidence>
<evidence type="ECO:0000256" key="4">
    <source>
        <dbReference type="SAM" id="MobiDB-lite"/>
    </source>
</evidence>
<evidence type="ECO:0000305" key="5"/>
<keyword id="KW-0064">Aspartyl protease</keyword>
<keyword id="KW-0067">ATP-binding</keyword>
<keyword id="KW-0963">Cytoplasm</keyword>
<keyword id="KW-0229">DNA integration</keyword>
<keyword id="KW-0233">DNA recombination</keyword>
<keyword id="KW-0238">DNA-binding</keyword>
<keyword id="KW-0239">DNA-directed DNA polymerase</keyword>
<keyword id="KW-0255">Endonuclease</keyword>
<keyword id="KW-0378">Hydrolase</keyword>
<keyword id="KW-0460">Magnesium</keyword>
<keyword id="KW-0479">Metal-binding</keyword>
<keyword id="KW-0511">Multifunctional enzyme</keyword>
<keyword id="KW-0540">Nuclease</keyword>
<keyword id="KW-0547">Nucleotide-binding</keyword>
<keyword id="KW-0548">Nucleotidyltransferase</keyword>
<keyword id="KW-0539">Nucleus</keyword>
<keyword id="KW-0645">Protease</keyword>
<keyword id="KW-1185">Reference proteome</keyword>
<keyword id="KW-0688">Ribosomal frameshifting</keyword>
<keyword id="KW-0694">RNA-binding</keyword>
<keyword id="KW-0695">RNA-directed DNA polymerase</keyword>
<keyword id="KW-0808">Transferase</keyword>
<keyword id="KW-0814">Transposable element</keyword>
<keyword id="KW-0815">Transposition</keyword>
<keyword id="KW-1188">Viral release from host cell</keyword>
<keyword id="KW-0917">Virion maturation</keyword>
<keyword id="KW-0862">Zinc</keyword>
<keyword id="KW-0863">Zinc-finger</keyword>
<comment type="function">
    <text evidence="1">Capsid protein (CA) is the structural component of the virus-like particle (VLP), forming the shell that encapsulates the retrotransposons dimeric RNA genome. The particles are assembled from trimer-clustered units and there are holes in the capsid shells that allow for the diffusion of macromolecules. CA also has nucleocapsid-like chaperone activity, promoting primer tRNA(i)-Met annealing to the multipartite primer-binding site (PBS), dimerization of Ty1 RNA and initiation of reverse transcription (By similarity).</text>
</comment>
<comment type="function">
    <text evidence="1">The aspartyl protease (PR) mediates the proteolytic cleavages of the Gag and Gag-Pol polyproteins after assembly of the VLP.</text>
</comment>
<comment type="function">
    <text evidence="1">Reverse transcriptase/ribonuclease H (RT) is a multifunctional enzyme that catalyzes the conversion of the retro-elements RNA genome into dsDNA within the VLP. The enzyme displays a DNA polymerase activity that can copy either DNA or RNA templates, and a ribonuclease H (RNase H) activity that cleaves the RNA strand of RNA-DNA heteroduplexes during plus-strand synthesis and hydrolyzes RNA primers. The conversion leads to a linear dsDNA copy of the retrotransposon that includes long terminal repeats (LTRs) at both ends (By similarity).</text>
</comment>
<comment type="function">
    <text evidence="1">Integrase (IN) targets the VLP to the nucleus, where a subparticle preintegration complex (PIC) containing at least integrase and the newly synthesized dsDNA copy of the retrotransposon must transit the nuclear membrane. Once in the nucleus, integrase performs the integration of the dsDNA into the host genome (By similarity).</text>
</comment>
<comment type="catalytic activity">
    <reaction>
        <text>DNA(n) + a 2'-deoxyribonucleoside 5'-triphosphate = DNA(n+1) + diphosphate</text>
        <dbReference type="Rhea" id="RHEA:22508"/>
        <dbReference type="Rhea" id="RHEA-COMP:17339"/>
        <dbReference type="Rhea" id="RHEA-COMP:17340"/>
        <dbReference type="ChEBI" id="CHEBI:33019"/>
        <dbReference type="ChEBI" id="CHEBI:61560"/>
        <dbReference type="ChEBI" id="CHEBI:173112"/>
        <dbReference type="EC" id="2.7.7.49"/>
    </reaction>
</comment>
<comment type="catalytic activity">
    <reaction>
        <text>DNA(n) + a 2'-deoxyribonucleoside 5'-triphosphate = DNA(n+1) + diphosphate</text>
        <dbReference type="Rhea" id="RHEA:22508"/>
        <dbReference type="Rhea" id="RHEA-COMP:17339"/>
        <dbReference type="Rhea" id="RHEA-COMP:17340"/>
        <dbReference type="ChEBI" id="CHEBI:33019"/>
        <dbReference type="ChEBI" id="CHEBI:61560"/>
        <dbReference type="ChEBI" id="CHEBI:173112"/>
        <dbReference type="EC" id="2.7.7.7"/>
    </reaction>
</comment>
<comment type="catalytic activity">
    <reaction>
        <text>Endonucleolytic cleavage to 5'-phosphomonoester.</text>
        <dbReference type="EC" id="3.1.26.4"/>
    </reaction>
</comment>
<comment type="subunit">
    <text evidence="1">The capsid protein forms a homotrimer, from which the VLPs are assembled. The protease is a homodimer, whose active site consists of two apposed aspartic acid residues (By similarity).</text>
</comment>
<comment type="subcellular location">
    <subcellularLocation>
        <location>Cytoplasm</location>
    </subcellularLocation>
    <subcellularLocation>
        <location evidence="1">Nucleus</location>
    </subcellularLocation>
</comment>
<comment type="alternative products">
    <event type="ribosomal frameshifting"/>
    <isoform>
        <id>Q04711-1</id>
        <name>Transposon Ty1-ML1 Gag-Pol polyprotein</name>
        <sequence type="displayed"/>
    </isoform>
    <isoform>
        <id>Q04706-1</id>
        <name>Transposon Ty1-ML1 Gag polyprotein</name>
        <sequence type="external"/>
    </isoform>
    <text evidence="1">The Gag-Pol polyprotein is generated by a +1 ribosomal frameshift. The ratio of Gag:Gag-Pol varies between 20:1 and 5:1 (By similarity).</text>
</comment>
<comment type="domain">
    <text evidence="1">The C-terminal RNA-binding region of CA is sufficient for all its nucleocapsid-like chaperone activities.</text>
</comment>
<comment type="domain">
    <text evidence="1">Integrase core domain contains the D-x(n)-D-x(35)-E motif, named for the phylogenetically conserved glutamic acid and aspartic acid residues and the invariant 35 amino acid spacing between the second and third acidic residues. Each acidic residue of the D,D(35)E motif is independently essential for the 3'-processing and strand transfer activities of purified integrase protein (By similarity).</text>
</comment>
<comment type="PTM">
    <text evidence="1">Initially, virus-like particles (VLPs) are composed of the structural unprocessed proteins Gag and Gag-Pol, and also contain the host initiator methionine tRNA (tRNA(i)-Met) which serves as a primer for minus-strand DNA synthesis, and a dimer of genomic Ty RNA. Processing of the polyproteins occurs within the particle and proceeds by an ordered pathway, called maturation. First, the protease (PR) is released by autocatalytic cleavage of the Gag-Pol polyprotein yielding capsid protein p45 and a Pol-p154 precursor protein. This cleavage is a prerequisite for subsequent processing of Pol-p154 at the remaining sites to release the mature structural and catalytic proteins. Maturation takes place prior to the RT reaction and is required to produce transposition-competent VLPs (By similarity).</text>
</comment>
<comment type="miscellaneous">
    <text>Retrotransposons are mobile genetic entities that are able to replicate via an RNA intermediate and a reverse transcription step. In contrast to retroviruses, retrotransposons are non-infectious, lack an envelope and remain intracellular. Ty1 retrotransposons belong to the copia elements (pseudoviridae).</text>
</comment>
<comment type="miscellaneous">
    <molecule>Isoform Transposon Ty1-ML1 Gag-Pol polyprotein</molecule>
    <text>Produced by +1 ribosomal frameshifting between codon Leu-435 and Gly-436 of the YML045W-A ORF.</text>
</comment>
<comment type="sequence caution" evidence="5">
    <conflict type="erroneous gene model prediction">
        <sequence resource="EMBL-CDS" id="CAA87830"/>
    </conflict>
</comment>